<comment type="function">
    <text evidence="1">Mitochondrial carrier mediating the transport of coenzyme A (CoA) in mitochondria in exchange for intramitochondrial (deoxy)adenine nucleotides and adenosine 3',5'-diphosphate.</text>
</comment>
<comment type="catalytic activity">
    <reaction evidence="1">
        <text>ADP(out) + CoA(in) = ADP(in) + CoA(out)</text>
        <dbReference type="Rhea" id="RHEA:72839"/>
        <dbReference type="ChEBI" id="CHEBI:57287"/>
        <dbReference type="ChEBI" id="CHEBI:456216"/>
    </reaction>
</comment>
<comment type="catalytic activity">
    <reaction evidence="1">
        <text>3'-dephospho-CoA(in) + ADP(out) = 3'-dephospho-CoA(out) + ADP(in)</text>
        <dbReference type="Rhea" id="RHEA:72843"/>
        <dbReference type="ChEBI" id="CHEBI:57328"/>
        <dbReference type="ChEBI" id="CHEBI:456216"/>
    </reaction>
</comment>
<comment type="catalytic activity">
    <reaction evidence="1">
        <text>adenosine 3',5'-bisphosphate(in) + ADP(out) = adenosine 3',5'-bisphosphate(out) + ADP(in)</text>
        <dbReference type="Rhea" id="RHEA:72847"/>
        <dbReference type="ChEBI" id="CHEBI:58343"/>
        <dbReference type="ChEBI" id="CHEBI:456216"/>
    </reaction>
</comment>
<comment type="catalytic activity">
    <reaction evidence="1">
        <text>AMP(in) + ADP(out) = AMP(out) + ADP(in)</text>
        <dbReference type="Rhea" id="RHEA:72851"/>
        <dbReference type="ChEBI" id="CHEBI:456215"/>
        <dbReference type="ChEBI" id="CHEBI:456216"/>
    </reaction>
</comment>
<comment type="catalytic activity">
    <reaction evidence="1">
        <text>dADP(in) + ADP(out) = dADP(out) + ADP(in)</text>
        <dbReference type="Rhea" id="RHEA:72855"/>
        <dbReference type="ChEBI" id="CHEBI:57667"/>
        <dbReference type="ChEBI" id="CHEBI:456216"/>
    </reaction>
</comment>
<comment type="catalytic activity">
    <reaction evidence="1">
        <text>ADP(in) + ATP(out) = ADP(out) + ATP(in)</text>
        <dbReference type="Rhea" id="RHEA:34999"/>
        <dbReference type="ChEBI" id="CHEBI:30616"/>
        <dbReference type="ChEBI" id="CHEBI:456216"/>
    </reaction>
</comment>
<comment type="subcellular location">
    <subcellularLocation>
        <location evidence="1">Mitochondrion inner membrane</location>
        <topology evidence="2">Multi-pass membrane protein</topology>
    </subcellularLocation>
</comment>
<comment type="similarity">
    <text evidence="3">Belongs to the mitochondrial carrier (TC 2.A.29) family.</text>
</comment>
<organism>
    <name type="scientific">Xenopus tropicalis</name>
    <name type="common">Western clawed frog</name>
    <name type="synonym">Silurana tropicalis</name>
    <dbReference type="NCBI Taxonomy" id="8364"/>
    <lineage>
        <taxon>Eukaryota</taxon>
        <taxon>Metazoa</taxon>
        <taxon>Chordata</taxon>
        <taxon>Craniata</taxon>
        <taxon>Vertebrata</taxon>
        <taxon>Euteleostomi</taxon>
        <taxon>Amphibia</taxon>
        <taxon>Batrachia</taxon>
        <taxon>Anura</taxon>
        <taxon>Pipoidea</taxon>
        <taxon>Pipidae</taxon>
        <taxon>Xenopodinae</taxon>
        <taxon>Xenopus</taxon>
        <taxon>Silurana</taxon>
    </lineage>
</organism>
<gene>
    <name type="primary">slc25a42</name>
</gene>
<reference key="1">
    <citation type="submission" date="2006-09" db="EMBL/GenBank/DDBJ databases">
        <authorList>
            <consortium name="NIH - Xenopus Gene Collection (XGC) project"/>
        </authorList>
    </citation>
    <scope>NUCLEOTIDE SEQUENCE [LARGE SCALE MRNA]</scope>
    <source>
        <strain>N6</strain>
        <tissue>Skin</tissue>
    </source>
</reference>
<proteinExistence type="evidence at transcript level"/>
<sequence length="327" mass="36036">MENGIKESQVGLNKNGTHAILPSPVVSEGHKNHKSILNSLMSGALAGAVAKTAVAPLDRTKIIFQVSSNRFSAKEAYRLIYRTYLNEGFLSLWRGNSATMVRVIPYAAIQFCAHEQYKKLLGSYYGFQGSALTPIPRLLAGALAGTTATIITYPLDLVRARMAVTPKEMYSNIIHVFMRMSREEGLKSLYRGFTPTVLGVIPYAGISFFTYETLKKLHAEHSGRTQPYPFERLLFGACAGLFGQSASYPLDVVRRRMQTAGVTGHAYGSIIGTMQEIVAEEGVIRGLYKGLSMNWVKGPVAVGISFTTFDLTQILLKKLQRLSDIQR</sequence>
<name>S2542_XENTR</name>
<keyword id="KW-0472">Membrane</keyword>
<keyword id="KW-0496">Mitochondrion</keyword>
<keyword id="KW-0999">Mitochondrion inner membrane</keyword>
<keyword id="KW-1185">Reference proteome</keyword>
<keyword id="KW-0677">Repeat</keyword>
<keyword id="KW-0812">Transmembrane</keyword>
<keyword id="KW-1133">Transmembrane helix</keyword>
<keyword id="KW-0813">Transport</keyword>
<accession>Q05AQ3</accession>
<protein>
    <recommendedName>
        <fullName>Mitochondrial coenzyme A transporter SLC25A42</fullName>
    </recommendedName>
    <alternativeName>
        <fullName>Solute carrier family 25 member 42</fullName>
    </alternativeName>
</protein>
<feature type="chain" id="PRO_0000291822" description="Mitochondrial coenzyme A transporter SLC25A42">
    <location>
        <begin position="1"/>
        <end position="327"/>
    </location>
</feature>
<feature type="transmembrane region" description="Helical; Name=1" evidence="2">
    <location>
        <begin position="36"/>
        <end position="56"/>
    </location>
</feature>
<feature type="transmembrane region" description="Helical; Name=2" evidence="2">
    <location>
        <begin position="92"/>
        <end position="112"/>
    </location>
</feature>
<feature type="transmembrane region" description="Helical; Name=3" evidence="2">
    <location>
        <begin position="138"/>
        <end position="158"/>
    </location>
</feature>
<feature type="transmembrane region" description="Helical; Name=4" evidence="2">
    <location>
        <begin position="189"/>
        <end position="209"/>
    </location>
</feature>
<feature type="transmembrane region" description="Helical; Name=5" evidence="2">
    <location>
        <begin position="233"/>
        <end position="253"/>
    </location>
</feature>
<feature type="transmembrane region" description="Helical; Name=6" evidence="2">
    <location>
        <begin position="296"/>
        <end position="316"/>
    </location>
</feature>
<feature type="repeat" description="Solcar 1">
    <location>
        <begin position="34"/>
        <end position="120"/>
    </location>
</feature>
<feature type="repeat" description="Solcar 2">
    <location>
        <begin position="132"/>
        <end position="217"/>
    </location>
</feature>
<feature type="repeat" description="Solcar 3">
    <location>
        <begin position="227"/>
        <end position="315"/>
    </location>
</feature>
<dbReference type="EMBL" id="BC124065">
    <property type="protein sequence ID" value="AAI24066.1"/>
    <property type="molecule type" value="mRNA"/>
</dbReference>
<dbReference type="RefSeq" id="NP_001072712.1">
    <property type="nucleotide sequence ID" value="NM_001079244.1"/>
</dbReference>
<dbReference type="RefSeq" id="XP_012821282.1">
    <property type="nucleotide sequence ID" value="XM_012965828.3"/>
</dbReference>
<dbReference type="SMR" id="Q05AQ3"/>
<dbReference type="FunCoup" id="Q05AQ3">
    <property type="interactions" value="1984"/>
</dbReference>
<dbReference type="STRING" id="8364.ENSXETP00000027857"/>
<dbReference type="PaxDb" id="8364-ENSXETP00000031355"/>
<dbReference type="GeneID" id="780169"/>
<dbReference type="KEGG" id="xtr:780169"/>
<dbReference type="AGR" id="Xenbase:XB-GENE-5933592"/>
<dbReference type="CTD" id="284439"/>
<dbReference type="Xenbase" id="XB-GENE-5933592">
    <property type="gene designation" value="slc25a42"/>
</dbReference>
<dbReference type="eggNOG" id="KOG0752">
    <property type="taxonomic scope" value="Eukaryota"/>
</dbReference>
<dbReference type="HOGENOM" id="CLU_015166_10_1_1"/>
<dbReference type="InParanoid" id="Q05AQ3"/>
<dbReference type="OMA" id="VYERMKW"/>
<dbReference type="OrthoDB" id="270584at2759"/>
<dbReference type="PhylomeDB" id="Q05AQ3"/>
<dbReference type="Reactome" id="R-XTR-199220">
    <property type="pathway name" value="Vitamin B5 (pantothenate) metabolism"/>
</dbReference>
<dbReference type="Proteomes" id="UP000008143">
    <property type="component" value="Chromosome 1"/>
</dbReference>
<dbReference type="Bgee" id="ENSXETG00000014336">
    <property type="expression patterns" value="Expressed in skeletal muscle tissue and 12 other cell types or tissues"/>
</dbReference>
<dbReference type="GO" id="GO:0005743">
    <property type="term" value="C:mitochondrial inner membrane"/>
    <property type="evidence" value="ECO:0007669"/>
    <property type="project" value="UniProtKB-SubCell"/>
</dbReference>
<dbReference type="GO" id="GO:0005739">
    <property type="term" value="C:mitochondrion"/>
    <property type="evidence" value="ECO:0000250"/>
    <property type="project" value="UniProtKB"/>
</dbReference>
<dbReference type="GO" id="GO:0043262">
    <property type="term" value="F:ADP phosphatase activity"/>
    <property type="evidence" value="ECO:0000250"/>
    <property type="project" value="UniProtKB"/>
</dbReference>
<dbReference type="GO" id="GO:0015217">
    <property type="term" value="F:ADP transmembrane transporter activity"/>
    <property type="evidence" value="ECO:0000250"/>
    <property type="project" value="UniProtKB"/>
</dbReference>
<dbReference type="GO" id="GO:0080122">
    <property type="term" value="F:AMP transmembrane transporter activity"/>
    <property type="evidence" value="ECO:0000250"/>
    <property type="project" value="UniProtKB"/>
</dbReference>
<dbReference type="GO" id="GO:0005347">
    <property type="term" value="F:ATP transmembrane transporter activity"/>
    <property type="evidence" value="ECO:0000250"/>
    <property type="project" value="UniProtKB"/>
</dbReference>
<dbReference type="GO" id="GO:0015228">
    <property type="term" value="F:coenzyme A transmembrane transporter activity"/>
    <property type="evidence" value="ECO:0000250"/>
    <property type="project" value="UniProtKB"/>
</dbReference>
<dbReference type="GO" id="GO:0015866">
    <property type="term" value="P:ADP transport"/>
    <property type="evidence" value="ECO:0000250"/>
    <property type="project" value="UniProtKB"/>
</dbReference>
<dbReference type="GO" id="GO:0080121">
    <property type="term" value="P:AMP transport"/>
    <property type="evidence" value="ECO:0000250"/>
    <property type="project" value="UniProtKB"/>
</dbReference>
<dbReference type="GO" id="GO:0015867">
    <property type="term" value="P:ATP transport"/>
    <property type="evidence" value="ECO:0000250"/>
    <property type="project" value="UniProtKB"/>
</dbReference>
<dbReference type="GO" id="GO:0035349">
    <property type="term" value="P:coenzyme A transmembrane transport"/>
    <property type="evidence" value="ECO:0000250"/>
    <property type="project" value="UniProtKB"/>
</dbReference>
<dbReference type="FunFam" id="1.50.40.10:FF:000014">
    <property type="entry name" value="mitochondrial coenzyme A transporter SLC25A42"/>
    <property type="match status" value="1"/>
</dbReference>
<dbReference type="Gene3D" id="1.50.40.10">
    <property type="entry name" value="Mitochondrial carrier domain"/>
    <property type="match status" value="1"/>
</dbReference>
<dbReference type="InterPro" id="IPR002167">
    <property type="entry name" value="GDC-like"/>
</dbReference>
<dbReference type="InterPro" id="IPR002067">
    <property type="entry name" value="Mit_carrier"/>
</dbReference>
<dbReference type="InterPro" id="IPR018108">
    <property type="entry name" value="Mitochondrial_sb/sol_carrier"/>
</dbReference>
<dbReference type="InterPro" id="IPR023395">
    <property type="entry name" value="Mt_carrier_dom_sf"/>
</dbReference>
<dbReference type="PANTHER" id="PTHR24089">
    <property type="entry name" value="SOLUTE CARRIER FAMILY 25"/>
    <property type="match status" value="1"/>
</dbReference>
<dbReference type="Pfam" id="PF00153">
    <property type="entry name" value="Mito_carr"/>
    <property type="match status" value="3"/>
</dbReference>
<dbReference type="PRINTS" id="PR00928">
    <property type="entry name" value="GRAVESDC"/>
</dbReference>
<dbReference type="PRINTS" id="PR00926">
    <property type="entry name" value="MITOCARRIER"/>
</dbReference>
<dbReference type="SUPFAM" id="SSF103506">
    <property type="entry name" value="Mitochondrial carrier"/>
    <property type="match status" value="1"/>
</dbReference>
<dbReference type="PROSITE" id="PS50920">
    <property type="entry name" value="SOLCAR"/>
    <property type="match status" value="3"/>
</dbReference>
<evidence type="ECO:0000250" key="1">
    <source>
        <dbReference type="UniProtKB" id="Q86VD7"/>
    </source>
</evidence>
<evidence type="ECO:0000255" key="2"/>
<evidence type="ECO:0000305" key="3"/>